<reference key="1">
    <citation type="journal article" date="2005" name="Proc. Natl. Acad. Sci. U.S.A.">
        <title>Complete genome sequence of Vibrio fischeri: a symbiotic bacterium with pathogenic congeners.</title>
        <authorList>
            <person name="Ruby E.G."/>
            <person name="Urbanowski M."/>
            <person name="Campbell J."/>
            <person name="Dunn A."/>
            <person name="Faini M."/>
            <person name="Gunsalus R."/>
            <person name="Lostroh P."/>
            <person name="Lupp C."/>
            <person name="McCann J."/>
            <person name="Millikan D."/>
            <person name="Schaefer A."/>
            <person name="Stabb E."/>
            <person name="Stevens A."/>
            <person name="Visick K."/>
            <person name="Whistler C."/>
            <person name="Greenberg E.P."/>
        </authorList>
    </citation>
    <scope>NUCLEOTIDE SEQUENCE [LARGE SCALE GENOMIC DNA]</scope>
    <source>
        <strain>ATCC 700601 / ES114</strain>
    </source>
</reference>
<feature type="chain" id="PRO_0000309440" description="UPF0502 protein VF_A0604">
    <location>
        <begin position="1"/>
        <end position="217"/>
    </location>
</feature>
<gene>
    <name type="ordered locus">VF_A0604</name>
</gene>
<protein>
    <recommendedName>
        <fullName evidence="1">UPF0502 protein VF_A0604</fullName>
    </recommendedName>
</protein>
<name>Y3604_ALIF1</name>
<organism>
    <name type="scientific">Aliivibrio fischeri (strain ATCC 700601 / ES114)</name>
    <name type="common">Vibrio fischeri</name>
    <dbReference type="NCBI Taxonomy" id="312309"/>
    <lineage>
        <taxon>Bacteria</taxon>
        <taxon>Pseudomonadati</taxon>
        <taxon>Pseudomonadota</taxon>
        <taxon>Gammaproteobacteria</taxon>
        <taxon>Vibrionales</taxon>
        <taxon>Vibrionaceae</taxon>
        <taxon>Aliivibrio</taxon>
    </lineage>
</organism>
<proteinExistence type="inferred from homology"/>
<sequence>MRIFSETEIRIIGCLIEKEITTPEQYPLTLNALTTACNQKSNRDPVTSLTDSDVLDSVNTLIQERIITDETRGNSRVAKYQHRFCNTEFGSLKLSKQELAVLCVLFLRGPQTPGELRTRTQRLCEFDNVAQVENVLNGLSADEHSPKVIKLAKEPGKREARFAHLFCGEVSQAIATVQQAPSESHDNERIVALESDVADLKLEVEELKKLINNLLDK</sequence>
<keyword id="KW-1185">Reference proteome</keyword>
<dbReference type="EMBL" id="CP000021">
    <property type="protein sequence ID" value="AAW87674.1"/>
    <property type="molecule type" value="Genomic_DNA"/>
</dbReference>
<dbReference type="RefSeq" id="WP_011263446.1">
    <property type="nucleotide sequence ID" value="NC_006841.2"/>
</dbReference>
<dbReference type="RefSeq" id="YP_206562.1">
    <property type="nucleotide sequence ID" value="NC_006841.2"/>
</dbReference>
<dbReference type="SMR" id="Q5DZX2"/>
<dbReference type="STRING" id="312309.VF_A0604"/>
<dbReference type="EnsemblBacteria" id="AAW87674">
    <property type="protein sequence ID" value="AAW87674"/>
    <property type="gene ID" value="VF_A0604"/>
</dbReference>
<dbReference type="GeneID" id="54165928"/>
<dbReference type="KEGG" id="vfi:VF_A0604"/>
<dbReference type="PATRIC" id="fig|312309.11.peg.3209"/>
<dbReference type="eggNOG" id="COG3132">
    <property type="taxonomic scope" value="Bacteria"/>
</dbReference>
<dbReference type="HOGENOM" id="CLU_057831_2_0_6"/>
<dbReference type="OrthoDB" id="9784785at2"/>
<dbReference type="Proteomes" id="UP000000537">
    <property type="component" value="Chromosome II"/>
</dbReference>
<dbReference type="Gene3D" id="1.10.10.10">
    <property type="entry name" value="Winged helix-like DNA-binding domain superfamily/Winged helix DNA-binding domain"/>
    <property type="match status" value="2"/>
</dbReference>
<dbReference type="HAMAP" id="MF_01584">
    <property type="entry name" value="UPF0502"/>
    <property type="match status" value="1"/>
</dbReference>
<dbReference type="InterPro" id="IPR007432">
    <property type="entry name" value="DUF480"/>
</dbReference>
<dbReference type="InterPro" id="IPR036388">
    <property type="entry name" value="WH-like_DNA-bd_sf"/>
</dbReference>
<dbReference type="InterPro" id="IPR036390">
    <property type="entry name" value="WH_DNA-bd_sf"/>
</dbReference>
<dbReference type="PANTHER" id="PTHR38768">
    <property type="entry name" value="UPF0502 PROTEIN YCEH"/>
    <property type="match status" value="1"/>
</dbReference>
<dbReference type="PANTHER" id="PTHR38768:SF1">
    <property type="entry name" value="UPF0502 PROTEIN YCEH"/>
    <property type="match status" value="1"/>
</dbReference>
<dbReference type="Pfam" id="PF04337">
    <property type="entry name" value="DUF480"/>
    <property type="match status" value="1"/>
</dbReference>
<dbReference type="SUPFAM" id="SSF46785">
    <property type="entry name" value="Winged helix' DNA-binding domain"/>
    <property type="match status" value="2"/>
</dbReference>
<accession>Q5DZX2</accession>
<evidence type="ECO:0000255" key="1">
    <source>
        <dbReference type="HAMAP-Rule" id="MF_01584"/>
    </source>
</evidence>
<comment type="similarity">
    <text evidence="1">Belongs to the UPF0502 family.</text>
</comment>